<accession>A2YEB4</accession>
<accession>Q42981</accession>
<accession>Q5Z7K2</accession>
<accession>Q9ZSS3</accession>
<feature type="chain" id="PRO_0000301655" description="Serine/threonine-protein phosphatase PP2A-1 catalytic subunit">
    <location>
        <begin position="1"/>
        <end position="306"/>
    </location>
</feature>
<feature type="active site" description="Proton donor" evidence="1">
    <location>
        <position position="115"/>
    </location>
</feature>
<feature type="binding site" evidence="1">
    <location>
        <position position="54"/>
    </location>
    <ligand>
        <name>Mn(2+)</name>
        <dbReference type="ChEBI" id="CHEBI:29035"/>
        <label>1</label>
    </ligand>
</feature>
<feature type="binding site" evidence="1">
    <location>
        <position position="56"/>
    </location>
    <ligand>
        <name>Mn(2+)</name>
        <dbReference type="ChEBI" id="CHEBI:29035"/>
        <label>1</label>
    </ligand>
</feature>
<feature type="binding site" evidence="1">
    <location>
        <position position="82"/>
    </location>
    <ligand>
        <name>Mn(2+)</name>
        <dbReference type="ChEBI" id="CHEBI:29035"/>
        <label>1</label>
    </ligand>
</feature>
<feature type="binding site" evidence="1">
    <location>
        <position position="82"/>
    </location>
    <ligand>
        <name>Mn(2+)</name>
        <dbReference type="ChEBI" id="CHEBI:29035"/>
        <label>2</label>
    </ligand>
</feature>
<feature type="binding site" evidence="1">
    <location>
        <position position="114"/>
    </location>
    <ligand>
        <name>Mn(2+)</name>
        <dbReference type="ChEBI" id="CHEBI:29035"/>
        <label>2</label>
    </ligand>
</feature>
<feature type="binding site" evidence="1">
    <location>
        <position position="164"/>
    </location>
    <ligand>
        <name>Mn(2+)</name>
        <dbReference type="ChEBI" id="CHEBI:29035"/>
        <label>2</label>
    </ligand>
</feature>
<feature type="binding site" evidence="1">
    <location>
        <position position="238"/>
    </location>
    <ligand>
        <name>Mn(2+)</name>
        <dbReference type="ChEBI" id="CHEBI:29035"/>
        <label>2</label>
    </ligand>
</feature>
<feature type="sequence conflict" description="In Ref. 1; AAA91806." evidence="2" ref="1">
    <original>C</original>
    <variation>S</variation>
    <location>
        <position position="47"/>
    </location>
</feature>
<feature type="sequence conflict" description="In Ref. 2; AAC72838." evidence="2" ref="2">
    <original>G</original>
    <variation>A</variation>
    <location>
        <position position="69"/>
    </location>
</feature>
<feature type="sequence conflict" description="In Ref. 1; AAA91806." evidence="2" ref="1">
    <original>D</original>
    <variation>E</variation>
    <location>
        <position position="106"/>
    </location>
</feature>
<feature type="sequence conflict" description="In Ref. 1; AAA91806." evidence="2" ref="1">
    <original>T</original>
    <variation>A</variation>
    <location>
        <position position="144"/>
    </location>
</feature>
<feature type="sequence conflict" description="In Ref. 1; AAA91806." evidence="2" ref="1">
    <original>F</original>
    <variation>N</variation>
    <location>
        <position position="217"/>
    </location>
</feature>
<feature type="sequence conflict" description="In Ref. 1; AAA91806." evidence="2" ref="1">
    <original>E</original>
    <variation>D</variation>
    <location>
        <position position="294"/>
    </location>
</feature>
<comment type="catalytic activity">
    <reaction>
        <text>O-phospho-L-seryl-[protein] + H2O = L-seryl-[protein] + phosphate</text>
        <dbReference type="Rhea" id="RHEA:20629"/>
        <dbReference type="Rhea" id="RHEA-COMP:9863"/>
        <dbReference type="Rhea" id="RHEA-COMP:11604"/>
        <dbReference type="ChEBI" id="CHEBI:15377"/>
        <dbReference type="ChEBI" id="CHEBI:29999"/>
        <dbReference type="ChEBI" id="CHEBI:43474"/>
        <dbReference type="ChEBI" id="CHEBI:83421"/>
        <dbReference type="EC" id="3.1.3.16"/>
    </reaction>
</comment>
<comment type="catalytic activity">
    <reaction>
        <text>O-phospho-L-threonyl-[protein] + H2O = L-threonyl-[protein] + phosphate</text>
        <dbReference type="Rhea" id="RHEA:47004"/>
        <dbReference type="Rhea" id="RHEA-COMP:11060"/>
        <dbReference type="Rhea" id="RHEA-COMP:11605"/>
        <dbReference type="ChEBI" id="CHEBI:15377"/>
        <dbReference type="ChEBI" id="CHEBI:30013"/>
        <dbReference type="ChEBI" id="CHEBI:43474"/>
        <dbReference type="ChEBI" id="CHEBI:61977"/>
        <dbReference type="EC" id="3.1.3.16"/>
    </reaction>
</comment>
<comment type="cofactor">
    <cofactor evidence="1">
        <name>Mn(2+)</name>
        <dbReference type="ChEBI" id="CHEBI:29035"/>
    </cofactor>
    <text evidence="1">Binds 2 manganese ions per subunit.</text>
</comment>
<comment type="subcellular location">
    <subcellularLocation>
        <location evidence="1">Cytoplasm</location>
    </subcellularLocation>
</comment>
<comment type="similarity">
    <text evidence="2">Belongs to the PPP phosphatase family. PP-2A subfamily.</text>
</comment>
<name>PP2A1_ORYSI</name>
<reference key="1">
    <citation type="journal article" date="1999" name="Plant Mol. Biol.">
        <title>Molecular characterization of catalytic-subunit cDNA sequences encoding protein phosphatases 1 and 2A and study of their roles in the gibberellin-dependent Osamy-c expression in rice.</title>
        <authorList>
            <person name="Chang M."/>
            <person name="Wang B."/>
            <person name="Chen X."/>
            <person name="Wu R."/>
        </authorList>
    </citation>
    <scope>NUCLEOTIDE SEQUENCE [MRNA]</scope>
    <source>
        <strain>cv. IR36</strain>
        <tissue>Seed</tissue>
    </source>
</reference>
<reference key="2">
    <citation type="journal article" date="2003" name="Plant Mol. Biol.">
        <title>Two genes encoding protein phosphatase 2A catalytic subunits are differentially expressed in rice.</title>
        <authorList>
            <person name="Yu R.M.K."/>
            <person name="Zhou Y."/>
            <person name="Xu Z.-F."/>
            <person name="Chye M.-L."/>
            <person name="Kong R.Y."/>
        </authorList>
    </citation>
    <scope>NUCLEOTIDE SEQUENCE [GENOMIC DNA]</scope>
    <source>
        <strain>cv. IR36</strain>
    </source>
</reference>
<reference key="3">
    <citation type="journal article" date="2005" name="PLoS Biol.">
        <title>The genomes of Oryza sativa: a history of duplications.</title>
        <authorList>
            <person name="Yu J."/>
            <person name="Wang J."/>
            <person name="Lin W."/>
            <person name="Li S."/>
            <person name="Li H."/>
            <person name="Zhou J."/>
            <person name="Ni P."/>
            <person name="Dong W."/>
            <person name="Hu S."/>
            <person name="Zeng C."/>
            <person name="Zhang J."/>
            <person name="Zhang Y."/>
            <person name="Li R."/>
            <person name="Xu Z."/>
            <person name="Li S."/>
            <person name="Li X."/>
            <person name="Zheng H."/>
            <person name="Cong L."/>
            <person name="Lin L."/>
            <person name="Yin J."/>
            <person name="Geng J."/>
            <person name="Li G."/>
            <person name="Shi J."/>
            <person name="Liu J."/>
            <person name="Lv H."/>
            <person name="Li J."/>
            <person name="Wang J."/>
            <person name="Deng Y."/>
            <person name="Ran L."/>
            <person name="Shi X."/>
            <person name="Wang X."/>
            <person name="Wu Q."/>
            <person name="Li C."/>
            <person name="Ren X."/>
            <person name="Wang J."/>
            <person name="Wang X."/>
            <person name="Li D."/>
            <person name="Liu D."/>
            <person name="Zhang X."/>
            <person name="Ji Z."/>
            <person name="Zhao W."/>
            <person name="Sun Y."/>
            <person name="Zhang Z."/>
            <person name="Bao J."/>
            <person name="Han Y."/>
            <person name="Dong L."/>
            <person name="Ji J."/>
            <person name="Chen P."/>
            <person name="Wu S."/>
            <person name="Liu J."/>
            <person name="Xiao Y."/>
            <person name="Bu D."/>
            <person name="Tan J."/>
            <person name="Yang L."/>
            <person name="Ye C."/>
            <person name="Zhang J."/>
            <person name="Xu J."/>
            <person name="Zhou Y."/>
            <person name="Yu Y."/>
            <person name="Zhang B."/>
            <person name="Zhuang S."/>
            <person name="Wei H."/>
            <person name="Liu B."/>
            <person name="Lei M."/>
            <person name="Yu H."/>
            <person name="Li Y."/>
            <person name="Xu H."/>
            <person name="Wei S."/>
            <person name="He X."/>
            <person name="Fang L."/>
            <person name="Zhang Z."/>
            <person name="Zhang Y."/>
            <person name="Huang X."/>
            <person name="Su Z."/>
            <person name="Tong W."/>
            <person name="Li J."/>
            <person name="Tong Z."/>
            <person name="Li S."/>
            <person name="Ye J."/>
            <person name="Wang L."/>
            <person name="Fang L."/>
            <person name="Lei T."/>
            <person name="Chen C.-S."/>
            <person name="Chen H.-C."/>
            <person name="Xu Z."/>
            <person name="Li H."/>
            <person name="Huang H."/>
            <person name="Zhang F."/>
            <person name="Xu H."/>
            <person name="Li N."/>
            <person name="Zhao C."/>
            <person name="Li S."/>
            <person name="Dong L."/>
            <person name="Huang Y."/>
            <person name="Li L."/>
            <person name="Xi Y."/>
            <person name="Qi Q."/>
            <person name="Li W."/>
            <person name="Zhang B."/>
            <person name="Hu W."/>
            <person name="Zhang Y."/>
            <person name="Tian X."/>
            <person name="Jiao Y."/>
            <person name="Liang X."/>
            <person name="Jin J."/>
            <person name="Gao L."/>
            <person name="Zheng W."/>
            <person name="Hao B."/>
            <person name="Liu S.-M."/>
            <person name="Wang W."/>
            <person name="Yuan L."/>
            <person name="Cao M."/>
            <person name="McDermott J."/>
            <person name="Samudrala R."/>
            <person name="Wang J."/>
            <person name="Wong G.K.-S."/>
            <person name="Yang H."/>
        </authorList>
    </citation>
    <scope>NUCLEOTIDE SEQUENCE [LARGE SCALE GENOMIC DNA]</scope>
    <source>
        <strain>cv. 93-11</strain>
    </source>
</reference>
<protein>
    <recommendedName>
        <fullName>Serine/threonine-protein phosphatase PP2A-1 catalytic subunit</fullName>
        <ecNumber>3.1.3.16</ecNumber>
    </recommendedName>
</protein>
<proteinExistence type="evidence at transcript level"/>
<keyword id="KW-0963">Cytoplasm</keyword>
<keyword id="KW-0378">Hydrolase</keyword>
<keyword id="KW-0464">Manganese</keyword>
<keyword id="KW-0479">Metal-binding</keyword>
<keyword id="KW-0904">Protein phosphatase</keyword>
<keyword id="KW-1185">Reference proteome</keyword>
<evidence type="ECO:0000250" key="1"/>
<evidence type="ECO:0000305" key="2"/>
<sequence length="306" mass="35114">MPSHADLDRQISQLRECKFLGEAEVRALCEQAKAILMEEWNVQPVRCPVTVCGDIHGQFYDLIELFRIGGDSPDTNYLFMGDYVDRGYYSVETVTLLVALKVRYRDRITILRGNHESRQITQVYGFYDECLRKYGNANVWKYFTDLFDYLPLTALVENQVFCLHGGLSPSLDTLDNIRALDRIQEVPHEGPMCDLLWSDPDDRCGWGISPRGAGYTFGQDIAQQFNHTNGLTLISRAHQLVMEGFNWCQDKNVVTVFSAPNYCYRCGNMAAILEIGENMDQNFLQFDPAPRQIEPDTTRKTPDYFL</sequence>
<dbReference type="EC" id="3.1.3.16"/>
<dbReference type="EMBL" id="U49113">
    <property type="protein sequence ID" value="AAA91806.1"/>
    <property type="molecule type" value="mRNA"/>
</dbReference>
<dbReference type="EMBL" id="AF097182">
    <property type="protein sequence ID" value="AAC72838.1"/>
    <property type="molecule type" value="Genomic_DNA"/>
</dbReference>
<dbReference type="EMBL" id="CM000131">
    <property type="protein sequence ID" value="EAZ01425.1"/>
    <property type="molecule type" value="Genomic_DNA"/>
</dbReference>
<dbReference type="PIR" id="T03389">
    <property type="entry name" value="T03389"/>
</dbReference>
<dbReference type="SMR" id="A2YEB4"/>
<dbReference type="STRING" id="39946.A2YEB4"/>
<dbReference type="EnsemblPlants" id="BGIOSGA023128-TA">
    <property type="protein sequence ID" value="BGIOSGA023128-PA"/>
    <property type="gene ID" value="BGIOSGA023128"/>
</dbReference>
<dbReference type="EnsemblPlants" id="OsGoSa_06g0019960.01">
    <property type="protein sequence ID" value="OsGoSa_06g0019960.01"/>
    <property type="gene ID" value="OsGoSa_06g0019960"/>
</dbReference>
<dbReference type="EnsemblPlants" id="OsIR64_06g0019820.01">
    <property type="protein sequence ID" value="OsIR64_06g0019820.01"/>
    <property type="gene ID" value="OsIR64_06g0019820"/>
</dbReference>
<dbReference type="EnsemblPlants" id="OsKYG_06g0020340.01">
    <property type="protein sequence ID" value="OsKYG_06g0020340.01"/>
    <property type="gene ID" value="OsKYG_06g0020340"/>
</dbReference>
<dbReference type="EnsemblPlants" id="OsLaMu_06g0020100.01">
    <property type="protein sequence ID" value="OsLaMu_06g0020100.01"/>
    <property type="gene ID" value="OsLaMu_06g0020100"/>
</dbReference>
<dbReference type="EnsemblPlants" id="OsLima_06g0020320.01">
    <property type="protein sequence ID" value="OsLima_06g0020320.01"/>
    <property type="gene ID" value="OsLima_06g0020320"/>
</dbReference>
<dbReference type="EnsemblPlants" id="OsLima_Ung0005800.01">
    <property type="protein sequence ID" value="OsLima_Ung0005800.01"/>
    <property type="gene ID" value="OsLima_Ung0005800"/>
</dbReference>
<dbReference type="EnsemblPlants" id="OsLiXu_06g0020650.01">
    <property type="protein sequence ID" value="OsLiXu_06g0020650.01"/>
    <property type="gene ID" value="OsLiXu_06g0020650"/>
</dbReference>
<dbReference type="EnsemblPlants" id="OsLiXu_Ung0036620.01">
    <property type="protein sequence ID" value="OsLiXu_Ung0036620.01"/>
    <property type="gene ID" value="OsLiXu_Ung0036620"/>
</dbReference>
<dbReference type="EnsemblPlants" id="OsMH63_06G020140_01">
    <property type="protein sequence ID" value="OsMH63_06G020140_01"/>
    <property type="gene ID" value="OsMH63_06G020140"/>
</dbReference>
<dbReference type="EnsemblPlants" id="OsPr106_06g0020430.01">
    <property type="protein sequence ID" value="OsPr106_06g0020430.01"/>
    <property type="gene ID" value="OsPr106_06g0020430"/>
</dbReference>
<dbReference type="EnsemblPlants" id="OsZS97_06G020370_01">
    <property type="protein sequence ID" value="OsZS97_06G020370_01"/>
    <property type="gene ID" value="OsZS97_06G020370"/>
</dbReference>
<dbReference type="Gramene" id="BGIOSGA023128-TA">
    <property type="protein sequence ID" value="BGIOSGA023128-PA"/>
    <property type="gene ID" value="BGIOSGA023128"/>
</dbReference>
<dbReference type="Gramene" id="OsGoSa_06g0019960.01">
    <property type="protein sequence ID" value="OsGoSa_06g0019960.01"/>
    <property type="gene ID" value="OsGoSa_06g0019960"/>
</dbReference>
<dbReference type="Gramene" id="OsIR64_06g0019820.01">
    <property type="protein sequence ID" value="OsIR64_06g0019820.01"/>
    <property type="gene ID" value="OsIR64_06g0019820"/>
</dbReference>
<dbReference type="Gramene" id="OsKYG_06g0020340.01">
    <property type="protein sequence ID" value="OsKYG_06g0020340.01"/>
    <property type="gene ID" value="OsKYG_06g0020340"/>
</dbReference>
<dbReference type="Gramene" id="OsLaMu_06g0020100.01">
    <property type="protein sequence ID" value="OsLaMu_06g0020100.01"/>
    <property type="gene ID" value="OsLaMu_06g0020100"/>
</dbReference>
<dbReference type="Gramene" id="OsLima_06g0020320.01">
    <property type="protein sequence ID" value="OsLima_06g0020320.01"/>
    <property type="gene ID" value="OsLima_06g0020320"/>
</dbReference>
<dbReference type="Gramene" id="OsLima_Ung0005800.01">
    <property type="protein sequence ID" value="OsLima_Ung0005800.01"/>
    <property type="gene ID" value="OsLima_Ung0005800"/>
</dbReference>
<dbReference type="Gramene" id="OsLiXu_06g0020650.01">
    <property type="protein sequence ID" value="OsLiXu_06g0020650.01"/>
    <property type="gene ID" value="OsLiXu_06g0020650"/>
</dbReference>
<dbReference type="Gramene" id="OsLiXu_Ung0036620.01">
    <property type="protein sequence ID" value="OsLiXu_Ung0036620.01"/>
    <property type="gene ID" value="OsLiXu_Ung0036620"/>
</dbReference>
<dbReference type="Gramene" id="OsMH63_06G020140_01">
    <property type="protein sequence ID" value="OsMH63_06G020140_01"/>
    <property type="gene ID" value="OsMH63_06G020140"/>
</dbReference>
<dbReference type="Gramene" id="OsPr106_06g0020430.01">
    <property type="protein sequence ID" value="OsPr106_06g0020430.01"/>
    <property type="gene ID" value="OsPr106_06g0020430"/>
</dbReference>
<dbReference type="Gramene" id="OsZS97_06G020370_01">
    <property type="protein sequence ID" value="OsZS97_06G020370_01"/>
    <property type="gene ID" value="OsZS97_06G020370"/>
</dbReference>
<dbReference type="HOGENOM" id="CLU_004962_8_1_1"/>
<dbReference type="OMA" id="GENMDQS"/>
<dbReference type="OrthoDB" id="1930084at2759"/>
<dbReference type="Proteomes" id="UP000007015">
    <property type="component" value="Chromosome 6"/>
</dbReference>
<dbReference type="GO" id="GO:0005737">
    <property type="term" value="C:cytoplasm"/>
    <property type="evidence" value="ECO:0007669"/>
    <property type="project" value="UniProtKB-SubCell"/>
</dbReference>
<dbReference type="GO" id="GO:0046872">
    <property type="term" value="F:metal ion binding"/>
    <property type="evidence" value="ECO:0007669"/>
    <property type="project" value="UniProtKB-KW"/>
</dbReference>
<dbReference type="GO" id="GO:0004722">
    <property type="term" value="F:protein serine/threonine phosphatase activity"/>
    <property type="evidence" value="ECO:0007669"/>
    <property type="project" value="UniProtKB-EC"/>
</dbReference>
<dbReference type="CDD" id="cd07415">
    <property type="entry name" value="MPP_PP2A_PP4_PP6"/>
    <property type="match status" value="1"/>
</dbReference>
<dbReference type="FunFam" id="3.60.21.10:FF:000003">
    <property type="entry name" value="Serine/threonine-protein phosphatase"/>
    <property type="match status" value="1"/>
</dbReference>
<dbReference type="Gene3D" id="3.60.21.10">
    <property type="match status" value="1"/>
</dbReference>
<dbReference type="InterPro" id="IPR004843">
    <property type="entry name" value="Calcineurin-like_PHP_ApaH"/>
</dbReference>
<dbReference type="InterPro" id="IPR029052">
    <property type="entry name" value="Metallo-depent_PP-like"/>
</dbReference>
<dbReference type="InterPro" id="IPR047129">
    <property type="entry name" value="PPA2-like"/>
</dbReference>
<dbReference type="InterPro" id="IPR006186">
    <property type="entry name" value="Ser/Thr-sp_prot-phosphatase"/>
</dbReference>
<dbReference type="PANTHER" id="PTHR45619">
    <property type="entry name" value="SERINE/THREONINE-PROTEIN PHOSPHATASE PP2A-RELATED"/>
    <property type="match status" value="1"/>
</dbReference>
<dbReference type="Pfam" id="PF00149">
    <property type="entry name" value="Metallophos"/>
    <property type="match status" value="1"/>
</dbReference>
<dbReference type="PRINTS" id="PR00114">
    <property type="entry name" value="STPHPHTASE"/>
</dbReference>
<dbReference type="SMART" id="SM00156">
    <property type="entry name" value="PP2Ac"/>
    <property type="match status" value="1"/>
</dbReference>
<dbReference type="SUPFAM" id="SSF56300">
    <property type="entry name" value="Metallo-dependent phosphatases"/>
    <property type="match status" value="1"/>
</dbReference>
<dbReference type="PROSITE" id="PS00125">
    <property type="entry name" value="SER_THR_PHOSPHATASE"/>
    <property type="match status" value="1"/>
</dbReference>
<gene>
    <name type="primary">PP2A1</name>
    <name type="ORF">OsI_022657</name>
</gene>
<organism>
    <name type="scientific">Oryza sativa subsp. indica</name>
    <name type="common">Rice</name>
    <dbReference type="NCBI Taxonomy" id="39946"/>
    <lineage>
        <taxon>Eukaryota</taxon>
        <taxon>Viridiplantae</taxon>
        <taxon>Streptophyta</taxon>
        <taxon>Embryophyta</taxon>
        <taxon>Tracheophyta</taxon>
        <taxon>Spermatophyta</taxon>
        <taxon>Magnoliopsida</taxon>
        <taxon>Liliopsida</taxon>
        <taxon>Poales</taxon>
        <taxon>Poaceae</taxon>
        <taxon>BOP clade</taxon>
        <taxon>Oryzoideae</taxon>
        <taxon>Oryzeae</taxon>
        <taxon>Oryzinae</taxon>
        <taxon>Oryza</taxon>
        <taxon>Oryza sativa</taxon>
    </lineage>
</organism>